<proteinExistence type="inferred from homology"/>
<protein>
    <recommendedName>
        <fullName>Tellurium resistance protein TerE</fullName>
    </recommendedName>
</protein>
<keyword id="KW-0614">Plasmid</keyword>
<keyword id="KW-0778">Tellurium resistance</keyword>
<sequence length="191" mass="20448">MAVSLVKGGNVSLTKEAPTMNVAMVGLGWDARVTDGQGFDLDASVFAVGEDGKVLSDAHFIFFNNKTSPDGAVEHQGDNRTGEGDGDDEQVKIDLTKVSADIKKLVFAVTIYDAEARKQNFGMVSNSFMRVYNNDNGTEIARFDLSEDASTETAMVFGELYRHGAEWKFKAVGQGFAGGLAALASQHGVNI</sequence>
<accession>Q52358</accession>
<evidence type="ECO:0000305" key="1"/>
<geneLocation type="plasmid">
    <name>IncHI2 R478</name>
</geneLocation>
<dbReference type="EMBL" id="U59239">
    <property type="protein sequence ID" value="AAA86851.1"/>
    <property type="molecule type" value="Genomic_DNA"/>
</dbReference>
<dbReference type="RefSeq" id="NP_941154.1">
    <property type="nucleotide sequence ID" value="NC_005211.1"/>
</dbReference>
<dbReference type="RefSeq" id="WP_000301247.1">
    <property type="nucleotide sequence ID" value="NZ_VOMJ01000014.1"/>
</dbReference>
<dbReference type="SMR" id="Q52358"/>
<dbReference type="GO" id="GO:0046690">
    <property type="term" value="P:response to tellurium ion"/>
    <property type="evidence" value="ECO:0007669"/>
    <property type="project" value="UniProtKB-KW"/>
</dbReference>
<dbReference type="CDD" id="cd06974">
    <property type="entry name" value="TerD_like"/>
    <property type="match status" value="1"/>
</dbReference>
<dbReference type="FunFam" id="2.60.60.30:FF:000001">
    <property type="entry name" value="Tellurium resistance protein TerD"/>
    <property type="match status" value="1"/>
</dbReference>
<dbReference type="Gene3D" id="2.60.60.30">
    <property type="entry name" value="sav2460 like domains"/>
    <property type="match status" value="1"/>
</dbReference>
<dbReference type="InterPro" id="IPR051324">
    <property type="entry name" value="Stress/Tellurium_Resist"/>
</dbReference>
<dbReference type="InterPro" id="IPR003325">
    <property type="entry name" value="TerD"/>
</dbReference>
<dbReference type="PANTHER" id="PTHR32097">
    <property type="entry name" value="CAMP-BINDING PROTEIN 1-RELATED"/>
    <property type="match status" value="1"/>
</dbReference>
<dbReference type="PANTHER" id="PTHR32097:SF4">
    <property type="entry name" value="GENERAL STRESS PROTEIN 16U"/>
    <property type="match status" value="1"/>
</dbReference>
<dbReference type="Pfam" id="PF02342">
    <property type="entry name" value="TerD"/>
    <property type="match status" value="1"/>
</dbReference>
<name>TERE_SERMA</name>
<organism>
    <name type="scientific">Serratia marcescens</name>
    <dbReference type="NCBI Taxonomy" id="615"/>
    <lineage>
        <taxon>Bacteria</taxon>
        <taxon>Pseudomonadati</taxon>
        <taxon>Pseudomonadota</taxon>
        <taxon>Gammaproteobacteria</taxon>
        <taxon>Enterobacterales</taxon>
        <taxon>Yersiniaceae</taxon>
        <taxon>Serratia</taxon>
    </lineage>
</organism>
<feature type="chain" id="PRO_0000170780" description="Tellurium resistance protein TerE">
    <location>
        <begin position="1"/>
        <end position="191"/>
    </location>
</feature>
<gene>
    <name type="primary">terE</name>
</gene>
<reference key="1">
    <citation type="journal article" date="1995" name="J. Bacteriol.">
        <title>Phage inhibition, colicin resistance, and tellurite resistance are encoded by a single cluster of genes on the IncHI2 plasmid R478.</title>
        <authorList>
            <person name="Whelan K.F."/>
            <person name="Colleran E."/>
            <person name="Taylor D.E."/>
        </authorList>
    </citation>
    <scope>NUCLEOTIDE SEQUENCE [GENOMIC DNA]</scope>
</reference>
<comment type="function">
    <text>Not known; seems to contribute to the tellurium resistance (Ter) mechanism. Also involved in phage inhibition (Phi) and colicin resistance (PacB).</text>
</comment>
<comment type="similarity">
    <text evidence="1">Belongs to the CAPAB/TerDEXZ family.</text>
</comment>